<feature type="chain" id="PRO_1000137337" description="Redox-sensing transcriptional repressor Rex">
    <location>
        <begin position="1"/>
        <end position="207"/>
    </location>
</feature>
<feature type="DNA-binding region" description="H-T-H motif" evidence="1">
    <location>
        <begin position="15"/>
        <end position="54"/>
    </location>
</feature>
<feature type="binding site" evidence="1">
    <location>
        <begin position="89"/>
        <end position="94"/>
    </location>
    <ligand>
        <name>NAD(+)</name>
        <dbReference type="ChEBI" id="CHEBI:57540"/>
    </ligand>
</feature>
<name>REX_THEAB</name>
<evidence type="ECO:0000255" key="1">
    <source>
        <dbReference type="HAMAP-Rule" id="MF_01131"/>
    </source>
</evidence>
<keyword id="KW-0963">Cytoplasm</keyword>
<keyword id="KW-0238">DNA-binding</keyword>
<keyword id="KW-0520">NAD</keyword>
<keyword id="KW-1185">Reference proteome</keyword>
<keyword id="KW-0678">Repressor</keyword>
<keyword id="KW-0804">Transcription</keyword>
<keyword id="KW-0805">Transcription regulation</keyword>
<sequence length="207" mass="23579">MEKKIPRPVIKRLGLYYRCLNRLYEEGIEYVASKDIAERLGIKSSQVRKDLSYFGEFGKRGVGYNTYELMERLEDIIGVNKYWNVIVIGAGNIGSAIANYEGLRKEKFNVIGIFDADRSKVGRKIGRLIVKHFSEIDDFFKKNIVEIAVLAVPENAAQMVVDKLEELGIKGIVNFAPVKLRTNIPVEDVDITLSFKSLSFKIERNIE</sequence>
<protein>
    <recommendedName>
        <fullName evidence="1">Redox-sensing transcriptional repressor Rex</fullName>
    </recommendedName>
</protein>
<proteinExistence type="inferred from homology"/>
<accession>B7IDQ7</accession>
<organism>
    <name type="scientific">Thermosipho africanus (strain TCF52B)</name>
    <dbReference type="NCBI Taxonomy" id="484019"/>
    <lineage>
        <taxon>Bacteria</taxon>
        <taxon>Thermotogati</taxon>
        <taxon>Thermotogota</taxon>
        <taxon>Thermotogae</taxon>
        <taxon>Thermotogales</taxon>
        <taxon>Fervidobacteriaceae</taxon>
        <taxon>Thermosipho</taxon>
    </lineage>
</organism>
<reference key="1">
    <citation type="journal article" date="2009" name="J. Bacteriol.">
        <title>The genome of Thermosipho africanus TCF52B: lateral genetic connections to the Firmicutes and Archaea.</title>
        <authorList>
            <person name="Nesboe C.L."/>
            <person name="Bapteste E."/>
            <person name="Curtis B."/>
            <person name="Dahle H."/>
            <person name="Lopez P."/>
            <person name="Macleod D."/>
            <person name="Dlutek M."/>
            <person name="Bowman S."/>
            <person name="Zhaxybayeva O."/>
            <person name="Birkeland N.-K."/>
            <person name="Doolittle W.F."/>
        </authorList>
    </citation>
    <scope>NUCLEOTIDE SEQUENCE [LARGE SCALE GENOMIC DNA]</scope>
    <source>
        <strain>TCF52B</strain>
    </source>
</reference>
<gene>
    <name evidence="1" type="primary">rex</name>
    <name type="ordered locus">THA_1697</name>
</gene>
<dbReference type="EMBL" id="CP001185">
    <property type="protein sequence ID" value="ACJ76134.1"/>
    <property type="molecule type" value="Genomic_DNA"/>
</dbReference>
<dbReference type="RefSeq" id="WP_012580357.1">
    <property type="nucleotide sequence ID" value="NC_011653.1"/>
</dbReference>
<dbReference type="SMR" id="B7IDQ7"/>
<dbReference type="STRING" id="484019.THA_1697"/>
<dbReference type="KEGG" id="taf:THA_1697"/>
<dbReference type="eggNOG" id="COG2344">
    <property type="taxonomic scope" value="Bacteria"/>
</dbReference>
<dbReference type="HOGENOM" id="CLU_061534_1_0_0"/>
<dbReference type="OrthoDB" id="9784760at2"/>
<dbReference type="Proteomes" id="UP000002453">
    <property type="component" value="Chromosome"/>
</dbReference>
<dbReference type="GO" id="GO:0005737">
    <property type="term" value="C:cytoplasm"/>
    <property type="evidence" value="ECO:0007669"/>
    <property type="project" value="UniProtKB-SubCell"/>
</dbReference>
<dbReference type="GO" id="GO:0003677">
    <property type="term" value="F:DNA binding"/>
    <property type="evidence" value="ECO:0007669"/>
    <property type="project" value="UniProtKB-UniRule"/>
</dbReference>
<dbReference type="GO" id="GO:0003700">
    <property type="term" value="F:DNA-binding transcription factor activity"/>
    <property type="evidence" value="ECO:0007669"/>
    <property type="project" value="UniProtKB-UniRule"/>
</dbReference>
<dbReference type="GO" id="GO:0045892">
    <property type="term" value="P:negative regulation of DNA-templated transcription"/>
    <property type="evidence" value="ECO:0007669"/>
    <property type="project" value="InterPro"/>
</dbReference>
<dbReference type="GO" id="GO:0051775">
    <property type="term" value="P:response to redox state"/>
    <property type="evidence" value="ECO:0007669"/>
    <property type="project" value="InterPro"/>
</dbReference>
<dbReference type="Gene3D" id="3.40.50.720">
    <property type="entry name" value="NAD(P)-binding Rossmann-like Domain"/>
    <property type="match status" value="1"/>
</dbReference>
<dbReference type="Gene3D" id="1.10.10.10">
    <property type="entry name" value="Winged helix-like DNA-binding domain superfamily/Winged helix DNA-binding domain"/>
    <property type="match status" value="1"/>
</dbReference>
<dbReference type="HAMAP" id="MF_01131">
    <property type="entry name" value="Rex"/>
    <property type="match status" value="1"/>
</dbReference>
<dbReference type="InterPro" id="IPR003781">
    <property type="entry name" value="CoA-bd"/>
</dbReference>
<dbReference type="InterPro" id="IPR036291">
    <property type="entry name" value="NAD(P)-bd_dom_sf"/>
</dbReference>
<dbReference type="InterPro" id="IPR009718">
    <property type="entry name" value="Rex_DNA-bd_C_dom"/>
</dbReference>
<dbReference type="InterPro" id="IPR022876">
    <property type="entry name" value="Tscrpt_rep_Rex"/>
</dbReference>
<dbReference type="InterPro" id="IPR036388">
    <property type="entry name" value="WH-like_DNA-bd_sf"/>
</dbReference>
<dbReference type="InterPro" id="IPR036390">
    <property type="entry name" value="WH_DNA-bd_sf"/>
</dbReference>
<dbReference type="NCBIfam" id="NF003989">
    <property type="entry name" value="PRK05472.1-3"/>
    <property type="match status" value="1"/>
</dbReference>
<dbReference type="NCBIfam" id="NF003993">
    <property type="entry name" value="PRK05472.2-2"/>
    <property type="match status" value="1"/>
</dbReference>
<dbReference type="NCBIfam" id="NF003994">
    <property type="entry name" value="PRK05472.2-3"/>
    <property type="match status" value="1"/>
</dbReference>
<dbReference type="NCBIfam" id="NF003995">
    <property type="entry name" value="PRK05472.2-4"/>
    <property type="match status" value="1"/>
</dbReference>
<dbReference type="NCBIfam" id="NF003996">
    <property type="entry name" value="PRK05472.2-5"/>
    <property type="match status" value="1"/>
</dbReference>
<dbReference type="PANTHER" id="PTHR35786">
    <property type="entry name" value="REDOX-SENSING TRANSCRIPTIONAL REPRESSOR REX"/>
    <property type="match status" value="1"/>
</dbReference>
<dbReference type="PANTHER" id="PTHR35786:SF1">
    <property type="entry name" value="REDOX-SENSING TRANSCRIPTIONAL REPRESSOR REX 1"/>
    <property type="match status" value="1"/>
</dbReference>
<dbReference type="Pfam" id="PF02629">
    <property type="entry name" value="CoA_binding"/>
    <property type="match status" value="1"/>
</dbReference>
<dbReference type="Pfam" id="PF06971">
    <property type="entry name" value="Put_DNA-bind_N"/>
    <property type="match status" value="1"/>
</dbReference>
<dbReference type="SMART" id="SM00881">
    <property type="entry name" value="CoA_binding"/>
    <property type="match status" value="1"/>
</dbReference>
<dbReference type="SUPFAM" id="SSF51735">
    <property type="entry name" value="NAD(P)-binding Rossmann-fold domains"/>
    <property type="match status" value="1"/>
</dbReference>
<dbReference type="SUPFAM" id="SSF46785">
    <property type="entry name" value="Winged helix' DNA-binding domain"/>
    <property type="match status" value="1"/>
</dbReference>
<comment type="function">
    <text evidence="1">Modulates transcription in response to changes in cellular NADH/NAD(+) redox state.</text>
</comment>
<comment type="subunit">
    <text evidence="1">Homodimer.</text>
</comment>
<comment type="subcellular location">
    <subcellularLocation>
        <location evidence="1">Cytoplasm</location>
    </subcellularLocation>
</comment>
<comment type="similarity">
    <text evidence="1">Belongs to the transcriptional regulatory Rex family.</text>
</comment>